<evidence type="ECO:0000255" key="1">
    <source>
        <dbReference type="HAMAP-Rule" id="MF_00063"/>
    </source>
</evidence>
<evidence type="ECO:0000269" key="2">
    <source>
    </source>
</evidence>
<evidence type="ECO:0000303" key="3">
    <source>
    </source>
</evidence>
<evidence type="ECO:0000305" key="4"/>
<protein>
    <recommendedName>
        <fullName evidence="1 3">Adenosine 5'-phosphosulfate reductase</fullName>
        <shortName evidence="1 3">APS reductase</shortName>
        <ecNumber evidence="1 2">1.8.4.10</ecNumber>
    </recommendedName>
    <alternativeName>
        <fullName evidence="1 4">5'-adenylylsulfate reductase</fullName>
    </alternativeName>
    <alternativeName>
        <fullName evidence="1 4">Thioredoxin-dependent 5'-adenylylsulfate reductase</fullName>
    </alternativeName>
</protein>
<dbReference type="EC" id="1.8.4.10" evidence="1 2"/>
<dbReference type="EMBL" id="AE007869">
    <property type="protein sequence ID" value="AAK86625.2"/>
    <property type="status" value="ALT_INIT"/>
    <property type="molecule type" value="Genomic_DNA"/>
</dbReference>
<dbReference type="PIR" id="AB2677">
    <property type="entry name" value="AB2677"/>
</dbReference>
<dbReference type="PIR" id="H97458">
    <property type="entry name" value="H97458"/>
</dbReference>
<dbReference type="RefSeq" id="NP_353840.2">
    <property type="nucleotide sequence ID" value="NC_003062.2"/>
</dbReference>
<dbReference type="RefSeq" id="WP_006310265.1">
    <property type="nucleotide sequence ID" value="NC_003062.2"/>
</dbReference>
<dbReference type="SMR" id="Q8UH67"/>
<dbReference type="STRING" id="176299.Atu0818"/>
<dbReference type="EnsemblBacteria" id="AAK86625">
    <property type="protein sequence ID" value="AAK86625"/>
    <property type="gene ID" value="Atu0818"/>
</dbReference>
<dbReference type="GeneID" id="1132856"/>
<dbReference type="KEGG" id="atu:Atu0818"/>
<dbReference type="PATRIC" id="fig|176299.10.peg.815"/>
<dbReference type="eggNOG" id="COG0175">
    <property type="taxonomic scope" value="Bacteria"/>
</dbReference>
<dbReference type="HOGENOM" id="CLU_044089_1_0_5"/>
<dbReference type="OrthoDB" id="9794018at2"/>
<dbReference type="BioCyc" id="AGRO:ATU0818-MONOMER"/>
<dbReference type="Proteomes" id="UP000000813">
    <property type="component" value="Chromosome circular"/>
</dbReference>
<dbReference type="GO" id="GO:0005737">
    <property type="term" value="C:cytoplasm"/>
    <property type="evidence" value="ECO:0007669"/>
    <property type="project" value="UniProtKB-SubCell"/>
</dbReference>
<dbReference type="GO" id="GO:0051539">
    <property type="term" value="F:4 iron, 4 sulfur cluster binding"/>
    <property type="evidence" value="ECO:0007669"/>
    <property type="project" value="UniProtKB-UniRule"/>
</dbReference>
<dbReference type="GO" id="GO:0043866">
    <property type="term" value="F:adenylyl-sulfate reductase (thioredoxin) activity"/>
    <property type="evidence" value="ECO:0007669"/>
    <property type="project" value="UniProtKB-EC"/>
</dbReference>
<dbReference type="GO" id="GO:0046872">
    <property type="term" value="F:metal ion binding"/>
    <property type="evidence" value="ECO:0007669"/>
    <property type="project" value="UniProtKB-KW"/>
</dbReference>
<dbReference type="GO" id="GO:0004604">
    <property type="term" value="F:phosphoadenylyl-sulfate reductase (thioredoxin) activity"/>
    <property type="evidence" value="ECO:0007669"/>
    <property type="project" value="UniProtKB-UniRule"/>
</dbReference>
<dbReference type="GO" id="GO:0019344">
    <property type="term" value="P:cysteine biosynthetic process"/>
    <property type="evidence" value="ECO:0007669"/>
    <property type="project" value="InterPro"/>
</dbReference>
<dbReference type="GO" id="GO:0070814">
    <property type="term" value="P:hydrogen sulfide biosynthetic process"/>
    <property type="evidence" value="ECO:0007669"/>
    <property type="project" value="UniProtKB-UniRule"/>
</dbReference>
<dbReference type="GO" id="GO:0019379">
    <property type="term" value="P:sulfate assimilation, phosphoadenylyl sulfate reduction by phosphoadenylyl-sulfate reductase (thioredoxin)"/>
    <property type="evidence" value="ECO:0007669"/>
    <property type="project" value="UniProtKB-UniRule"/>
</dbReference>
<dbReference type="CDD" id="cd23945">
    <property type="entry name" value="PAPS_reductase"/>
    <property type="match status" value="1"/>
</dbReference>
<dbReference type="Gene3D" id="3.40.50.620">
    <property type="entry name" value="HUPs"/>
    <property type="match status" value="1"/>
</dbReference>
<dbReference type="HAMAP" id="MF_00063">
    <property type="entry name" value="CysH"/>
    <property type="match status" value="1"/>
</dbReference>
<dbReference type="InterPro" id="IPR011798">
    <property type="entry name" value="APS_reductase"/>
</dbReference>
<dbReference type="InterPro" id="IPR004511">
    <property type="entry name" value="PAPS/APS_Rdtase"/>
</dbReference>
<dbReference type="InterPro" id="IPR002500">
    <property type="entry name" value="PAPS_reduct_dom"/>
</dbReference>
<dbReference type="InterPro" id="IPR014729">
    <property type="entry name" value="Rossmann-like_a/b/a_fold"/>
</dbReference>
<dbReference type="NCBIfam" id="TIGR02055">
    <property type="entry name" value="APS_reductase"/>
    <property type="match status" value="1"/>
</dbReference>
<dbReference type="NCBIfam" id="NF002537">
    <property type="entry name" value="PRK02090.1"/>
    <property type="match status" value="1"/>
</dbReference>
<dbReference type="PANTHER" id="PTHR46482:SF9">
    <property type="entry name" value="5'-ADENYLYLSULFATE REDUCTASE 1, CHLOROPLASTIC"/>
    <property type="match status" value="1"/>
</dbReference>
<dbReference type="PANTHER" id="PTHR46482">
    <property type="entry name" value="5'-ADENYLYLSULFATE REDUCTASE 3, CHLOROPLASTIC"/>
    <property type="match status" value="1"/>
</dbReference>
<dbReference type="Pfam" id="PF01507">
    <property type="entry name" value="PAPS_reduct"/>
    <property type="match status" value="1"/>
</dbReference>
<dbReference type="PIRSF" id="PIRSF000857">
    <property type="entry name" value="PAPS_reductase"/>
    <property type="match status" value="1"/>
</dbReference>
<dbReference type="SUPFAM" id="SSF52402">
    <property type="entry name" value="Adenine nucleotide alpha hydrolases-like"/>
    <property type="match status" value="1"/>
</dbReference>
<feature type="chain" id="PRO_0000100622" description="Adenosine 5'-phosphosulfate reductase">
    <location>
        <begin position="1"/>
        <end position="260"/>
    </location>
</feature>
<feature type="active site" description="Nucleophile; cysteine thiosulfonate intermediate" evidence="1">
    <location>
        <position position="241"/>
    </location>
</feature>
<feature type="binding site" evidence="1">
    <location>
        <position position="130"/>
    </location>
    <ligand>
        <name>[4Fe-4S] cluster</name>
        <dbReference type="ChEBI" id="CHEBI:49883"/>
    </ligand>
</feature>
<feature type="binding site" evidence="1">
    <location>
        <position position="131"/>
    </location>
    <ligand>
        <name>[4Fe-4S] cluster</name>
        <dbReference type="ChEBI" id="CHEBI:49883"/>
    </ligand>
</feature>
<feature type="binding site" evidence="1">
    <location>
        <position position="213"/>
    </location>
    <ligand>
        <name>[4Fe-4S] cluster</name>
        <dbReference type="ChEBI" id="CHEBI:49883"/>
    </ligand>
</feature>
<feature type="binding site" evidence="1">
    <location>
        <position position="216"/>
    </location>
    <ligand>
        <name>[4Fe-4S] cluster</name>
        <dbReference type="ChEBI" id="CHEBI:49883"/>
    </ligand>
</feature>
<keyword id="KW-0963">Cytoplasm</keyword>
<keyword id="KW-0408">Iron</keyword>
<keyword id="KW-0411">Iron-sulfur</keyword>
<keyword id="KW-0479">Metal-binding</keyword>
<keyword id="KW-0560">Oxidoreductase</keyword>
<keyword id="KW-1185">Reference proteome</keyword>
<gene>
    <name evidence="1 3" type="primary">cysH</name>
    <name type="ordered locus">Atu0818</name>
    <name type="ORF">AGR_C_1497</name>
</gene>
<proteinExistence type="evidence at protein level"/>
<accession>Q8UH67</accession>
<organism>
    <name type="scientific">Agrobacterium fabrum (strain C58 / ATCC 33970)</name>
    <name type="common">Agrobacterium tumefaciens (strain C58)</name>
    <dbReference type="NCBI Taxonomy" id="176299"/>
    <lineage>
        <taxon>Bacteria</taxon>
        <taxon>Pseudomonadati</taxon>
        <taxon>Pseudomonadota</taxon>
        <taxon>Alphaproteobacteria</taxon>
        <taxon>Hyphomicrobiales</taxon>
        <taxon>Rhizobiaceae</taxon>
        <taxon>Rhizobium/Agrobacterium group</taxon>
        <taxon>Agrobacterium</taxon>
        <taxon>Agrobacterium tumefaciens complex</taxon>
    </lineage>
</organism>
<reference key="1">
    <citation type="journal article" date="2001" name="Science">
        <title>The genome of the natural genetic engineer Agrobacterium tumefaciens C58.</title>
        <authorList>
            <person name="Wood D.W."/>
            <person name="Setubal J.C."/>
            <person name="Kaul R."/>
            <person name="Monks D.E."/>
            <person name="Kitajima J.P."/>
            <person name="Okura V.K."/>
            <person name="Zhou Y."/>
            <person name="Chen L."/>
            <person name="Wood G.E."/>
            <person name="Almeida N.F. Jr."/>
            <person name="Woo L."/>
            <person name="Chen Y."/>
            <person name="Paulsen I.T."/>
            <person name="Eisen J.A."/>
            <person name="Karp P.D."/>
            <person name="Bovee D. Sr."/>
            <person name="Chapman P."/>
            <person name="Clendenning J."/>
            <person name="Deatherage G."/>
            <person name="Gillet W."/>
            <person name="Grant C."/>
            <person name="Kutyavin T."/>
            <person name="Levy R."/>
            <person name="Li M.-J."/>
            <person name="McClelland E."/>
            <person name="Palmieri A."/>
            <person name="Raymond C."/>
            <person name="Rouse G."/>
            <person name="Saenphimmachak C."/>
            <person name="Wu Z."/>
            <person name="Romero P."/>
            <person name="Gordon D."/>
            <person name="Zhang S."/>
            <person name="Yoo H."/>
            <person name="Tao Y."/>
            <person name="Biddle P."/>
            <person name="Jung M."/>
            <person name="Krespan W."/>
            <person name="Perry M."/>
            <person name="Gordon-Kamm B."/>
            <person name="Liao L."/>
            <person name="Kim S."/>
            <person name="Hendrick C."/>
            <person name="Zhao Z.-Y."/>
            <person name="Dolan M."/>
            <person name="Chumley F."/>
            <person name="Tingey S.V."/>
            <person name="Tomb J.-F."/>
            <person name="Gordon M.P."/>
            <person name="Olson M.V."/>
            <person name="Nester E.W."/>
        </authorList>
    </citation>
    <scope>NUCLEOTIDE SEQUENCE [LARGE SCALE GENOMIC DNA]</scope>
    <source>
        <strain>C58 / ATCC 33970</strain>
    </source>
</reference>
<reference key="2">
    <citation type="journal article" date="2001" name="Science">
        <title>Genome sequence of the plant pathogen and biotechnology agent Agrobacterium tumefaciens C58.</title>
        <authorList>
            <person name="Goodner B."/>
            <person name="Hinkle G."/>
            <person name="Gattung S."/>
            <person name="Miller N."/>
            <person name="Blanchard M."/>
            <person name="Qurollo B."/>
            <person name="Goldman B.S."/>
            <person name="Cao Y."/>
            <person name="Askenazi M."/>
            <person name="Halling C."/>
            <person name="Mullin L."/>
            <person name="Houmiel K."/>
            <person name="Gordon J."/>
            <person name="Vaudin M."/>
            <person name="Iartchouk O."/>
            <person name="Epp A."/>
            <person name="Liu F."/>
            <person name="Wollam C."/>
            <person name="Allinger M."/>
            <person name="Doughty D."/>
            <person name="Scott C."/>
            <person name="Lappas C."/>
            <person name="Markelz B."/>
            <person name="Flanagan C."/>
            <person name="Crowell C."/>
            <person name="Gurson J."/>
            <person name="Lomo C."/>
            <person name="Sear C."/>
            <person name="Strub G."/>
            <person name="Cielo C."/>
            <person name="Slater S."/>
        </authorList>
    </citation>
    <scope>NUCLEOTIDE SEQUENCE [LARGE SCALE GENOMIC DNA]</scope>
    <source>
        <strain>C58 / ATCC 33970</strain>
    </source>
</reference>
<reference key="3">
    <citation type="journal article" date="1999" name="J. Bacteriol.">
        <title>Reduction of adenosine-5'-phosphosulfate instead of 3'-phosphoadenosine-5'-phosphosulfate in cysteine biosynthesis by Rhizobium meliloti and other members of the family Rhizobiaceae.</title>
        <authorList>
            <person name="Abola A.P."/>
            <person name="Willits M.G."/>
            <person name="Wang R.C."/>
            <person name="Long S.R."/>
        </authorList>
    </citation>
    <scope>FUNCTION</scope>
    <scope>CATALYTIC ACTIVITY</scope>
    <source>
        <strain>A136</strain>
    </source>
</reference>
<name>CYSH_AGRFC</name>
<comment type="function">
    <text evidence="1 2">Catalyzes the formation of sulfite from adenosine 5'-phosphosulfate (APS) using thioredoxin as an electron donor.</text>
</comment>
<comment type="catalytic activity">
    <reaction evidence="1 2">
        <text>[thioredoxin]-disulfide + sulfite + AMP + 2 H(+) = adenosine 5'-phosphosulfate + [thioredoxin]-dithiol</text>
        <dbReference type="Rhea" id="RHEA:21976"/>
        <dbReference type="Rhea" id="RHEA-COMP:10698"/>
        <dbReference type="Rhea" id="RHEA-COMP:10700"/>
        <dbReference type="ChEBI" id="CHEBI:15378"/>
        <dbReference type="ChEBI" id="CHEBI:17359"/>
        <dbReference type="ChEBI" id="CHEBI:29950"/>
        <dbReference type="ChEBI" id="CHEBI:50058"/>
        <dbReference type="ChEBI" id="CHEBI:58243"/>
        <dbReference type="ChEBI" id="CHEBI:456215"/>
        <dbReference type="EC" id="1.8.4.10"/>
    </reaction>
</comment>
<comment type="cofactor">
    <cofactor evidence="1">
        <name>[4Fe-4S] cluster</name>
        <dbReference type="ChEBI" id="CHEBI:49883"/>
    </cofactor>
    <text evidence="1">Binds 1 [4Fe-4S] cluster per subunit.</text>
</comment>
<comment type="pathway">
    <text evidence="1">Sulfur metabolism; hydrogen sulfide biosynthesis; sulfite from sulfate.</text>
</comment>
<comment type="subcellular location">
    <subcellularLocation>
        <location evidence="1">Cytoplasm</location>
    </subcellularLocation>
</comment>
<comment type="similarity">
    <text evidence="1">Belongs to the PAPS reductase family. CysH subfamily.</text>
</comment>
<comment type="sequence caution" evidence="4">
    <conflict type="erroneous initiation">
        <sequence resource="EMBL-CDS" id="AAK86625"/>
    </conflict>
</comment>
<sequence>MEIPDVTMTINSTNASADTASLDATLAGLDLAGRLSFVAGLGGRAVFTTSLGIEDQVITAAIGTHRLPIDVVTLETGRLFKETVDLIDETEERFGIEIRRFRPEQDDIDAYAAKYGLNGFYESVEARHACCHVRKLIPLGKALEGAAFWITGLRRGQSGNRAATPFAEFDAERNLIKINALADWDIEQIRAYVAEENIPVNPLHQRGYPSIGCEPCTRAIKPGEPERAGRWWWENDEKRECGLHVAGAEQTPPVSAIPQR</sequence>